<proteinExistence type="inferred from homology"/>
<feature type="chain" id="PRO_0000251056" description="Probable chemoreceptor glutamine deamidase CheD">
    <location>
        <begin position="1"/>
        <end position="184"/>
    </location>
</feature>
<comment type="function">
    <text evidence="1">Probably deamidates glutamine residues to glutamate on methyl-accepting chemotaxis receptors (MCPs), playing an important role in chemotaxis.</text>
</comment>
<comment type="catalytic activity">
    <reaction evidence="1">
        <text>L-glutaminyl-[protein] + H2O = L-glutamyl-[protein] + NH4(+)</text>
        <dbReference type="Rhea" id="RHEA:16441"/>
        <dbReference type="Rhea" id="RHEA-COMP:10207"/>
        <dbReference type="Rhea" id="RHEA-COMP:10208"/>
        <dbReference type="ChEBI" id="CHEBI:15377"/>
        <dbReference type="ChEBI" id="CHEBI:28938"/>
        <dbReference type="ChEBI" id="CHEBI:29973"/>
        <dbReference type="ChEBI" id="CHEBI:30011"/>
        <dbReference type="EC" id="3.5.1.44"/>
    </reaction>
</comment>
<comment type="similarity">
    <text evidence="1">Belongs to the CheD family.</text>
</comment>
<name>CHED_RHIJ3</name>
<evidence type="ECO:0000255" key="1">
    <source>
        <dbReference type="HAMAP-Rule" id="MF_01440"/>
    </source>
</evidence>
<gene>
    <name evidence="1" type="primary">cheD</name>
    <name type="ordered locus">RL0693</name>
</gene>
<sequence>MITEGAARRVHIIQGEYKVLNDPNAVLSTILGSCVAACLRDPVAGVGGMNHFLLPGSATSPTSGGDATRYGVHLMELLINGLLKQGARRDRLEAKIFGGAKTISTFSNVGEQNAAFAVQFLRDEGIPVVGSSTGGEHGRKLEYWPVSGRARQYPLTGAETQRTVALEQRPAAPQKPVETSIEFF</sequence>
<keyword id="KW-0145">Chemotaxis</keyword>
<keyword id="KW-0378">Hydrolase</keyword>
<organism>
    <name type="scientific">Rhizobium johnstonii (strain DSM 114642 / LMG 32736 / 3841)</name>
    <name type="common">Rhizobium leguminosarum bv. viciae</name>
    <dbReference type="NCBI Taxonomy" id="216596"/>
    <lineage>
        <taxon>Bacteria</taxon>
        <taxon>Pseudomonadati</taxon>
        <taxon>Pseudomonadota</taxon>
        <taxon>Alphaproteobacteria</taxon>
        <taxon>Hyphomicrobiales</taxon>
        <taxon>Rhizobiaceae</taxon>
        <taxon>Rhizobium/Agrobacterium group</taxon>
        <taxon>Rhizobium</taxon>
        <taxon>Rhizobium johnstonii</taxon>
    </lineage>
</organism>
<protein>
    <recommendedName>
        <fullName evidence="1">Probable chemoreceptor glutamine deamidase CheD</fullName>
        <ecNumber evidence="1">3.5.1.44</ecNumber>
    </recommendedName>
</protein>
<accession>Q1MLG6</accession>
<dbReference type="EC" id="3.5.1.44" evidence="1"/>
<dbReference type="EMBL" id="AM236080">
    <property type="protein sequence ID" value="CAK06187.1"/>
    <property type="molecule type" value="Genomic_DNA"/>
</dbReference>
<dbReference type="RefSeq" id="WP_003545509.1">
    <property type="nucleotide sequence ID" value="NC_008380.1"/>
</dbReference>
<dbReference type="SMR" id="Q1MLG6"/>
<dbReference type="EnsemblBacteria" id="CAK06187">
    <property type="protein sequence ID" value="CAK06187"/>
    <property type="gene ID" value="RL0693"/>
</dbReference>
<dbReference type="GeneID" id="84668315"/>
<dbReference type="KEGG" id="rle:RL0693"/>
<dbReference type="eggNOG" id="COG1871">
    <property type="taxonomic scope" value="Bacteria"/>
</dbReference>
<dbReference type="HOGENOM" id="CLU_087854_0_1_5"/>
<dbReference type="Proteomes" id="UP000006575">
    <property type="component" value="Chromosome"/>
</dbReference>
<dbReference type="GO" id="GO:0050568">
    <property type="term" value="F:protein-glutamine glutaminase activity"/>
    <property type="evidence" value="ECO:0007669"/>
    <property type="project" value="UniProtKB-UniRule"/>
</dbReference>
<dbReference type="GO" id="GO:0006935">
    <property type="term" value="P:chemotaxis"/>
    <property type="evidence" value="ECO:0007669"/>
    <property type="project" value="UniProtKB-UniRule"/>
</dbReference>
<dbReference type="CDD" id="cd16352">
    <property type="entry name" value="CheD"/>
    <property type="match status" value="1"/>
</dbReference>
<dbReference type="FunFam" id="3.30.1330.200:FF:000001">
    <property type="entry name" value="Probable chemoreceptor glutamine deamidase CheD"/>
    <property type="match status" value="1"/>
</dbReference>
<dbReference type="Gene3D" id="3.30.1330.200">
    <property type="match status" value="1"/>
</dbReference>
<dbReference type="HAMAP" id="MF_01440">
    <property type="entry name" value="CheD"/>
    <property type="match status" value="1"/>
</dbReference>
<dbReference type="InterPro" id="IPR038592">
    <property type="entry name" value="CheD-like_sf"/>
</dbReference>
<dbReference type="InterPro" id="IPR005659">
    <property type="entry name" value="Chemorcpt_Glu_NH3ase_CheD"/>
</dbReference>
<dbReference type="InterPro" id="IPR011324">
    <property type="entry name" value="Cytotoxic_necrot_fac-like_cat"/>
</dbReference>
<dbReference type="NCBIfam" id="NF010019">
    <property type="entry name" value="PRK13497.1"/>
    <property type="match status" value="1"/>
</dbReference>
<dbReference type="PANTHER" id="PTHR35147">
    <property type="entry name" value="CHEMORECEPTOR GLUTAMINE DEAMIDASE CHED-RELATED"/>
    <property type="match status" value="1"/>
</dbReference>
<dbReference type="PANTHER" id="PTHR35147:SF2">
    <property type="entry name" value="CHEMORECEPTOR GLUTAMINE DEAMIDASE CHED-RELATED"/>
    <property type="match status" value="1"/>
</dbReference>
<dbReference type="Pfam" id="PF03975">
    <property type="entry name" value="CheD"/>
    <property type="match status" value="1"/>
</dbReference>
<dbReference type="SUPFAM" id="SSF64438">
    <property type="entry name" value="CNF1/YfiH-like putative cysteine hydrolases"/>
    <property type="match status" value="1"/>
</dbReference>
<reference key="1">
    <citation type="journal article" date="2006" name="Genome Biol.">
        <title>The genome of Rhizobium leguminosarum has recognizable core and accessory components.</title>
        <authorList>
            <person name="Young J.P.W."/>
            <person name="Crossman L.C."/>
            <person name="Johnston A.W.B."/>
            <person name="Thomson N.R."/>
            <person name="Ghazoui Z.F."/>
            <person name="Hull K.H."/>
            <person name="Wexler M."/>
            <person name="Curson A.R.J."/>
            <person name="Todd J.D."/>
            <person name="Poole P.S."/>
            <person name="Mauchline T.H."/>
            <person name="East A.K."/>
            <person name="Quail M.A."/>
            <person name="Churcher C."/>
            <person name="Arrowsmith C."/>
            <person name="Cherevach I."/>
            <person name="Chillingworth T."/>
            <person name="Clarke K."/>
            <person name="Cronin A."/>
            <person name="Davis P."/>
            <person name="Fraser A."/>
            <person name="Hance Z."/>
            <person name="Hauser H."/>
            <person name="Jagels K."/>
            <person name="Moule S."/>
            <person name="Mungall K."/>
            <person name="Norbertczak H."/>
            <person name="Rabbinowitsch E."/>
            <person name="Sanders M."/>
            <person name="Simmonds M."/>
            <person name="Whitehead S."/>
            <person name="Parkhill J."/>
        </authorList>
    </citation>
    <scope>NUCLEOTIDE SEQUENCE [LARGE SCALE GENOMIC DNA]</scope>
    <source>
        <strain>DSM 114642 / LMG 32736 / 3841</strain>
    </source>
</reference>